<feature type="chain" id="PRO_1000189671" description="ATP-dependent Clp protease proteolytic subunit">
    <location>
        <begin position="1"/>
        <end position="196"/>
    </location>
</feature>
<feature type="active site" description="Nucleophile" evidence="1">
    <location>
        <position position="96"/>
    </location>
</feature>
<feature type="active site" evidence="1">
    <location>
        <position position="121"/>
    </location>
</feature>
<protein>
    <recommendedName>
        <fullName evidence="1">ATP-dependent Clp protease proteolytic subunit</fullName>
        <ecNumber evidence="1">3.4.21.92</ecNumber>
    </recommendedName>
    <alternativeName>
        <fullName evidence="1">Endopeptidase Clp</fullName>
    </alternativeName>
</protein>
<sequence length="196" mass="21358">MIPVVIEQTSRGERSYDIYSRLLKDRIIMLTGPVEDNMANSVIAQLLFLDAQDSTKDIYLYVNTPGGSVSAGLAIVDTMNFIKADVQTIVMGMAASMGTVIASSGAKGKRFMLPNAEYMIHQPMGGTGGGTQQTDMAIAAEHLLKTRNTLEKILAENSGQSMEKVHADAERDNWMSAQETLEYGFIDEIMANNSLN</sequence>
<evidence type="ECO:0000255" key="1">
    <source>
        <dbReference type="HAMAP-Rule" id="MF_00444"/>
    </source>
</evidence>
<comment type="function">
    <text evidence="1">Cleaves peptides in various proteins in a process that requires ATP hydrolysis. Has a chymotrypsin-like activity. Plays a major role in the degradation of misfolded proteins.</text>
</comment>
<comment type="catalytic activity">
    <reaction evidence="1">
        <text>Hydrolysis of proteins to small peptides in the presence of ATP and magnesium. alpha-casein is the usual test substrate. In the absence of ATP, only oligopeptides shorter than five residues are hydrolyzed (such as succinyl-Leu-Tyr-|-NHMec, and Leu-Tyr-Leu-|-Tyr-Trp, in which cleavage of the -Tyr-|-Leu- and -Tyr-|-Trp bonds also occurs).</text>
        <dbReference type="EC" id="3.4.21.92"/>
    </reaction>
</comment>
<comment type="subunit">
    <text evidence="1">Fourteen ClpP subunits assemble into 2 heptameric rings which stack back to back to give a disk-like structure with a central cavity, resembling the structure of eukaryotic proteasomes.</text>
</comment>
<comment type="subcellular location">
    <subcellularLocation>
        <location evidence="1">Cytoplasm</location>
    </subcellularLocation>
</comment>
<comment type="similarity">
    <text evidence="1">Belongs to the peptidase S14 family.</text>
</comment>
<keyword id="KW-0963">Cytoplasm</keyword>
<keyword id="KW-0378">Hydrolase</keyword>
<keyword id="KW-0645">Protease</keyword>
<keyword id="KW-0720">Serine protease</keyword>
<organism>
    <name type="scientific">Streptococcus pneumoniae (strain Hungary19A-6)</name>
    <dbReference type="NCBI Taxonomy" id="487214"/>
    <lineage>
        <taxon>Bacteria</taxon>
        <taxon>Bacillati</taxon>
        <taxon>Bacillota</taxon>
        <taxon>Bacilli</taxon>
        <taxon>Lactobacillales</taxon>
        <taxon>Streptococcaceae</taxon>
        <taxon>Streptococcus</taxon>
    </lineage>
</organism>
<dbReference type="EC" id="3.4.21.92" evidence="1"/>
<dbReference type="EMBL" id="CP000936">
    <property type="protein sequence ID" value="ACA35598.1"/>
    <property type="molecule type" value="Genomic_DNA"/>
</dbReference>
<dbReference type="RefSeq" id="WP_000613477.1">
    <property type="nucleotide sequence ID" value="NC_010380.1"/>
</dbReference>
<dbReference type="SMR" id="B1IAS4"/>
<dbReference type="MEROPS" id="S14.001"/>
<dbReference type="KEGG" id="spv:SPH_0848"/>
<dbReference type="HOGENOM" id="CLU_058707_3_2_9"/>
<dbReference type="Proteomes" id="UP000002163">
    <property type="component" value="Chromosome"/>
</dbReference>
<dbReference type="GO" id="GO:0005737">
    <property type="term" value="C:cytoplasm"/>
    <property type="evidence" value="ECO:0007669"/>
    <property type="project" value="UniProtKB-SubCell"/>
</dbReference>
<dbReference type="GO" id="GO:0009368">
    <property type="term" value="C:endopeptidase Clp complex"/>
    <property type="evidence" value="ECO:0007669"/>
    <property type="project" value="TreeGrafter"/>
</dbReference>
<dbReference type="GO" id="GO:0004176">
    <property type="term" value="F:ATP-dependent peptidase activity"/>
    <property type="evidence" value="ECO:0007669"/>
    <property type="project" value="InterPro"/>
</dbReference>
<dbReference type="GO" id="GO:0051117">
    <property type="term" value="F:ATPase binding"/>
    <property type="evidence" value="ECO:0007669"/>
    <property type="project" value="TreeGrafter"/>
</dbReference>
<dbReference type="GO" id="GO:0004252">
    <property type="term" value="F:serine-type endopeptidase activity"/>
    <property type="evidence" value="ECO:0007669"/>
    <property type="project" value="UniProtKB-UniRule"/>
</dbReference>
<dbReference type="GO" id="GO:0006515">
    <property type="term" value="P:protein quality control for misfolded or incompletely synthesized proteins"/>
    <property type="evidence" value="ECO:0007669"/>
    <property type="project" value="TreeGrafter"/>
</dbReference>
<dbReference type="CDD" id="cd07017">
    <property type="entry name" value="S14_ClpP_2"/>
    <property type="match status" value="1"/>
</dbReference>
<dbReference type="FunFam" id="3.90.226.10:FF:000014">
    <property type="entry name" value="ATP-dependent Clp protease proteolytic subunit"/>
    <property type="match status" value="1"/>
</dbReference>
<dbReference type="Gene3D" id="3.90.226.10">
    <property type="entry name" value="2-enoyl-CoA Hydratase, Chain A, domain 1"/>
    <property type="match status" value="1"/>
</dbReference>
<dbReference type="HAMAP" id="MF_00444">
    <property type="entry name" value="ClpP"/>
    <property type="match status" value="1"/>
</dbReference>
<dbReference type="InterPro" id="IPR001907">
    <property type="entry name" value="ClpP"/>
</dbReference>
<dbReference type="InterPro" id="IPR029045">
    <property type="entry name" value="ClpP/crotonase-like_dom_sf"/>
</dbReference>
<dbReference type="InterPro" id="IPR023562">
    <property type="entry name" value="ClpP/TepA"/>
</dbReference>
<dbReference type="InterPro" id="IPR033135">
    <property type="entry name" value="ClpP_His_AS"/>
</dbReference>
<dbReference type="InterPro" id="IPR018215">
    <property type="entry name" value="ClpP_Ser_AS"/>
</dbReference>
<dbReference type="NCBIfam" id="NF001368">
    <property type="entry name" value="PRK00277.1"/>
    <property type="match status" value="1"/>
</dbReference>
<dbReference type="NCBIfam" id="NF009205">
    <property type="entry name" value="PRK12553.1"/>
    <property type="match status" value="1"/>
</dbReference>
<dbReference type="PANTHER" id="PTHR10381">
    <property type="entry name" value="ATP-DEPENDENT CLP PROTEASE PROTEOLYTIC SUBUNIT"/>
    <property type="match status" value="1"/>
</dbReference>
<dbReference type="PANTHER" id="PTHR10381:SF70">
    <property type="entry name" value="ATP-DEPENDENT CLP PROTEASE PROTEOLYTIC SUBUNIT"/>
    <property type="match status" value="1"/>
</dbReference>
<dbReference type="Pfam" id="PF00574">
    <property type="entry name" value="CLP_protease"/>
    <property type="match status" value="1"/>
</dbReference>
<dbReference type="PRINTS" id="PR00127">
    <property type="entry name" value="CLPPROTEASEP"/>
</dbReference>
<dbReference type="SUPFAM" id="SSF52096">
    <property type="entry name" value="ClpP/crotonase"/>
    <property type="match status" value="1"/>
</dbReference>
<dbReference type="PROSITE" id="PS00382">
    <property type="entry name" value="CLP_PROTEASE_HIS"/>
    <property type="match status" value="1"/>
</dbReference>
<dbReference type="PROSITE" id="PS00381">
    <property type="entry name" value="CLP_PROTEASE_SER"/>
    <property type="match status" value="1"/>
</dbReference>
<name>CLPP_STRPI</name>
<gene>
    <name evidence="1" type="primary">clpP</name>
    <name type="ordered locus">SPH_0848</name>
</gene>
<reference key="1">
    <citation type="journal article" date="2010" name="Genome Biol.">
        <title>Structure and dynamics of the pan-genome of Streptococcus pneumoniae and closely related species.</title>
        <authorList>
            <person name="Donati C."/>
            <person name="Hiller N.L."/>
            <person name="Tettelin H."/>
            <person name="Muzzi A."/>
            <person name="Croucher N.J."/>
            <person name="Angiuoli S.V."/>
            <person name="Oggioni M."/>
            <person name="Dunning Hotopp J.C."/>
            <person name="Hu F.Z."/>
            <person name="Riley D.R."/>
            <person name="Covacci A."/>
            <person name="Mitchell T.J."/>
            <person name="Bentley S.D."/>
            <person name="Kilian M."/>
            <person name="Ehrlich G.D."/>
            <person name="Rappuoli R."/>
            <person name="Moxon E.R."/>
            <person name="Masignani V."/>
        </authorList>
    </citation>
    <scope>NUCLEOTIDE SEQUENCE [LARGE SCALE GENOMIC DNA]</scope>
    <source>
        <strain>Hungary19A-6</strain>
    </source>
</reference>
<proteinExistence type="inferred from homology"/>
<accession>B1IAS4</accession>